<gene>
    <name evidence="16" type="primary">SLC24A4</name>
    <name evidence="13" type="synonym">NCKX4</name>
</gene>
<organism>
    <name type="scientific">Homo sapiens</name>
    <name type="common">Human</name>
    <dbReference type="NCBI Taxonomy" id="9606"/>
    <lineage>
        <taxon>Eukaryota</taxon>
        <taxon>Metazoa</taxon>
        <taxon>Chordata</taxon>
        <taxon>Craniata</taxon>
        <taxon>Vertebrata</taxon>
        <taxon>Euteleostomi</taxon>
        <taxon>Mammalia</taxon>
        <taxon>Eutheria</taxon>
        <taxon>Euarchontoglires</taxon>
        <taxon>Primates</taxon>
        <taxon>Haplorrhini</taxon>
        <taxon>Catarrhini</taxon>
        <taxon>Hominidae</taxon>
        <taxon>Homo</taxon>
    </lineage>
</organism>
<protein>
    <recommendedName>
        <fullName>Sodium/potassium/calcium exchanger 4</fullName>
    </recommendedName>
    <alternativeName>
        <fullName evidence="13">Na(+)/K(+)/Ca(2+)-exchange protein 4</fullName>
    </alternativeName>
    <alternativeName>
        <fullName>Solute carrier family 24 member 4</fullName>
    </alternativeName>
</protein>
<sequence>MALRGTLRPLKVRRRREMLPQQVGFVCAVLALVCCASGLFGSLGHKTASASKRVLPDTWRNRKLMAPVNGTQTAKNCTDPAIHEFPTDLFSNKERQHGAVLLHILGALYMFYALAIVCDDFFVPSLEKICERLHLSEDVAGATFMAAGSSTPELFASVIGVFITHGDVGVGTIVGSAVFNILCIIGVCGLFAGQVVRLTWWAVCRDSVYYTISVIVLIVFIYDEQIVWWEGLVLIILYVFYILIMKYNVKMQAFFTVKQKSIANGNPVNSELEAGNDFYDGSYDDPSVPLLGQVKEKPQYGKNPVVMVDEIMSSSPPKFTFPEAGLRIMITNKFGPRTRLRMASRIIINERQRLINSANGVSSKPLQNGRHENIENGNVPVENPEDPQQNQEQQPPPQPPPPEPEPVEADFLSPFSVPEARGDKVKWVFTWPLIFLLCVTIPNCSKPRWEKFFMVTFITATLWIAVFSYIMVWLVTIIGYTLGIPDVIMGITFLAAGTSVPDCMASLIVARQGLGDMAVSNTIGSNVFDILVGLGVPWGLQTMVVNYGSTVKINSRGLVYSVVLLLGSVALTVLGIHLNKWRLDRKLGVYVLVLYAIFLCFSIMIEFNVFTFVNLPMCREDD</sequence>
<keyword id="KW-0025">Alternative splicing</keyword>
<keyword id="KW-0986">Amelogenesis imperfecta</keyword>
<keyword id="KW-0050">Antiport</keyword>
<keyword id="KW-0106">Calcium</keyword>
<keyword id="KW-0109">Calcium transport</keyword>
<keyword id="KW-1003">Cell membrane</keyword>
<keyword id="KW-0963">Cytoplasm</keyword>
<keyword id="KW-0225">Disease variant</keyword>
<keyword id="KW-0325">Glycoprotein</keyword>
<keyword id="KW-0406">Ion transport</keyword>
<keyword id="KW-0472">Membrane</keyword>
<keyword id="KW-0552">Olfaction</keyword>
<keyword id="KW-0630">Potassium</keyword>
<keyword id="KW-0633">Potassium transport</keyword>
<keyword id="KW-1267">Proteomics identification</keyword>
<keyword id="KW-1185">Reference proteome</keyword>
<keyword id="KW-0677">Repeat</keyword>
<keyword id="KW-0716">Sensory transduction</keyword>
<keyword id="KW-0732">Signal</keyword>
<keyword id="KW-0915">Sodium</keyword>
<keyword id="KW-0739">Sodium transport</keyword>
<keyword id="KW-0769">Symport</keyword>
<keyword id="KW-0812">Transmembrane</keyword>
<keyword id="KW-1133">Transmembrane helix</keyword>
<keyword id="KW-0813">Transport</keyword>
<feature type="signal peptide" evidence="2">
    <location>
        <begin position="1"/>
        <end position="38"/>
    </location>
</feature>
<feature type="chain" id="PRO_0000019373" description="Sodium/potassium/calcium exchanger 4">
    <location>
        <begin position="39"/>
        <end position="622"/>
    </location>
</feature>
<feature type="topological domain" description="Extracellular" evidence="15">
    <location>
        <begin position="39"/>
        <end position="97"/>
    </location>
</feature>
<feature type="transmembrane region" description="Helical" evidence="2">
    <location>
        <begin position="98"/>
        <end position="118"/>
    </location>
</feature>
<feature type="topological domain" description="Cytoplasmic" evidence="15">
    <location>
        <begin position="119"/>
        <end position="142"/>
    </location>
</feature>
<feature type="transmembrane region" description="Helical" evidence="2">
    <location>
        <begin position="143"/>
        <end position="163"/>
    </location>
</feature>
<feature type="topological domain" description="Extracellular" evidence="15">
    <location>
        <begin position="164"/>
        <end position="172"/>
    </location>
</feature>
<feature type="transmembrane region" description="Helical" evidence="2">
    <location>
        <begin position="173"/>
        <end position="193"/>
    </location>
</feature>
<feature type="topological domain" description="Cytoplasmic" evidence="15">
    <location>
        <begin position="194"/>
        <end position="200"/>
    </location>
</feature>
<feature type="transmembrane region" description="Helical" evidence="2">
    <location>
        <begin position="201"/>
        <end position="221"/>
    </location>
</feature>
<feature type="topological domain" description="Extracellular" evidence="15">
    <location>
        <begin position="222"/>
        <end position="224"/>
    </location>
</feature>
<feature type="transmembrane region" description="Helical" evidence="2">
    <location>
        <begin position="225"/>
        <end position="245"/>
    </location>
</feature>
<feature type="topological domain" description="Cytoplasmic" evidence="15">
    <location>
        <begin position="246"/>
        <end position="457"/>
    </location>
</feature>
<feature type="transmembrane region" description="Helical" evidence="2">
    <location>
        <begin position="458"/>
        <end position="478"/>
    </location>
</feature>
<feature type="topological domain" description="Extracellular" evidence="15">
    <location>
        <position position="479"/>
    </location>
</feature>
<feature type="transmembrane region" description="Helical" evidence="2">
    <location>
        <begin position="480"/>
        <end position="500"/>
    </location>
</feature>
<feature type="topological domain" description="Cytoplasmic" evidence="15">
    <location>
        <begin position="501"/>
        <end position="526"/>
    </location>
</feature>
<feature type="transmembrane region" description="Helical" evidence="2">
    <location>
        <begin position="527"/>
        <end position="547"/>
    </location>
</feature>
<feature type="topological domain" description="Extracellular" evidence="15">
    <location>
        <begin position="548"/>
        <end position="557"/>
    </location>
</feature>
<feature type="transmembrane region" description="Helical" evidence="2">
    <location>
        <begin position="558"/>
        <end position="578"/>
    </location>
</feature>
<feature type="topological domain" description="Cytoplasmic" evidence="15">
    <location>
        <begin position="579"/>
        <end position="586"/>
    </location>
</feature>
<feature type="transmembrane region" description="Helical" evidence="2">
    <location>
        <begin position="587"/>
        <end position="607"/>
    </location>
</feature>
<feature type="topological domain" description="Extracellular" evidence="15">
    <location>
        <begin position="608"/>
        <end position="622"/>
    </location>
</feature>
<feature type="repeat" description="Alpha-1">
    <location>
        <begin position="139"/>
        <end position="179"/>
    </location>
</feature>
<feature type="repeat" description="Alpha-2">
    <location>
        <begin position="495"/>
        <end position="526"/>
    </location>
</feature>
<feature type="region of interest" description="Disordered" evidence="3">
    <location>
        <begin position="358"/>
        <end position="410"/>
    </location>
</feature>
<feature type="compositionally biased region" description="Low complexity" evidence="3">
    <location>
        <begin position="380"/>
        <end position="393"/>
    </location>
</feature>
<feature type="compositionally biased region" description="Pro residues" evidence="3">
    <location>
        <begin position="394"/>
        <end position="404"/>
    </location>
</feature>
<feature type="glycosylation site" description="N-linked (GlcNAc...) asparagine" evidence="2">
    <location>
        <position position="69"/>
    </location>
</feature>
<feature type="glycosylation site" description="N-linked (GlcNAc...) asparagine" evidence="2">
    <location>
        <position position="76"/>
    </location>
</feature>
<feature type="splice variant" id="VSP_008370" description="In isoform 4." evidence="14">
    <location>
        <begin position="1"/>
        <end position="109"/>
    </location>
</feature>
<feature type="splice variant" id="VSP_008369" description="In isoform 2." evidence="13">
    <location>
        <begin position="1"/>
        <end position="64"/>
    </location>
</feature>
<feature type="splice variant" id="VSP_008371" description="In isoform 4." evidence="14">
    <location>
        <begin position="172"/>
        <end position="210"/>
    </location>
</feature>
<feature type="splice variant" id="VSP_008372" description="In isoform 3." evidence="13 14">
    <location>
        <begin position="275"/>
        <end position="293"/>
    </location>
</feature>
<feature type="sequence variant" id="VAR_071475" description="In AI2A5; autosomal recessive; dbSNP:rs587777537." evidence="7 12">
    <original>A</original>
    <variation>V</variation>
    <location>
        <position position="146"/>
    </location>
</feature>
<feature type="sequence variant" id="VAR_090421" description="In AI2A5; uncertain significance." evidence="12">
    <location>
        <begin position="205"/>
        <end position="622"/>
    </location>
</feature>
<feature type="sequence variant" id="VAR_090422" description="In AI2A5; uncertain significance." evidence="11">
    <location>
        <begin position="398"/>
        <end position="622"/>
    </location>
</feature>
<feature type="sequence variant" id="VAR_090423" description="In AI2A5; uncertain significance." evidence="8">
    <original>L</original>
    <variation>R</variation>
    <location>
        <position position="436"/>
    </location>
</feature>
<feature type="sequence variant" id="VAR_070183" description="In AI2A5; autosomal recessive; dbSNP:rs587777536." evidence="6">
    <original>S</original>
    <variation>C</variation>
    <location>
        <position position="499"/>
    </location>
</feature>
<feature type="sequence variant" id="VAR_090424" description="In AI2A5; uncertain significance." evidence="10">
    <original>G</original>
    <variation>D</variation>
    <location>
        <position position="535"/>
    </location>
</feature>
<feature type="sequence variant" id="VAR_042664" description="In dbSNP:rs4900130.">
    <original>V</original>
    <variation>I</variation>
    <location>
        <position position="613"/>
    </location>
</feature>
<feature type="sequence conflict" description="In Ref. 2; BAC04715." evidence="15" ref="2">
    <original>C</original>
    <variation>S</variation>
    <location>
        <position position="444"/>
    </location>
</feature>
<feature type="sequence conflict" description="In Ref. 2; BAG58108." evidence="15" ref="2">
    <original>Y</original>
    <variation>H</variation>
    <location>
        <position position="560"/>
    </location>
</feature>
<dbReference type="EMBL" id="AF520704">
    <property type="protein sequence ID" value="AAM76070.1"/>
    <property type="status" value="ALT_INIT"/>
    <property type="molecule type" value="mRNA"/>
</dbReference>
<dbReference type="EMBL" id="AF520705">
    <property type="protein sequence ID" value="AAM76071.1"/>
    <property type="status" value="ALT_INIT"/>
    <property type="molecule type" value="mRNA"/>
</dbReference>
<dbReference type="EMBL" id="AF520706">
    <property type="protein sequence ID" value="AAM76072.1"/>
    <property type="molecule type" value="mRNA"/>
</dbReference>
<dbReference type="EMBL" id="AK096171">
    <property type="protein sequence ID" value="BAC04715.1"/>
    <property type="status" value="ALT_SEQ"/>
    <property type="molecule type" value="mRNA"/>
</dbReference>
<dbReference type="EMBL" id="AK295059">
    <property type="protein sequence ID" value="BAG58108.1"/>
    <property type="molecule type" value="mRNA"/>
</dbReference>
<dbReference type="EMBL" id="AL118559">
    <property type="status" value="NOT_ANNOTATED_CDS"/>
    <property type="molecule type" value="Genomic_DNA"/>
</dbReference>
<dbReference type="EMBL" id="CH471061">
    <property type="protein sequence ID" value="EAW81485.1"/>
    <property type="molecule type" value="Genomic_DNA"/>
</dbReference>
<dbReference type="EMBL" id="BC069653">
    <property type="protein sequence ID" value="AAH69653.1"/>
    <property type="status" value="ALT_INIT"/>
    <property type="molecule type" value="mRNA"/>
</dbReference>
<dbReference type="EMBL" id="AL834225">
    <property type="protein sequence ID" value="CAD38903.1"/>
    <property type="status" value="ALT_INIT"/>
    <property type="molecule type" value="mRNA"/>
</dbReference>
<dbReference type="CCDS" id="CCDS45155.2">
    <molecule id="Q8NFF2-3"/>
</dbReference>
<dbReference type="CCDS" id="CCDS45156.1">
    <molecule id="Q8NFF2-2"/>
</dbReference>
<dbReference type="CCDS" id="CCDS9903.2">
    <molecule id="Q8NFF2-1"/>
</dbReference>
<dbReference type="RefSeq" id="NP_001365549.1">
    <molecule id="Q8NFF2-1"/>
    <property type="nucleotide sequence ID" value="NM_001378620.1"/>
</dbReference>
<dbReference type="RefSeq" id="NP_001412183.1">
    <molecule id="Q8NFF2-3"/>
    <property type="nucleotide sequence ID" value="NM_001425254.1"/>
</dbReference>
<dbReference type="RefSeq" id="NP_705932.2">
    <molecule id="Q8NFF2-1"/>
    <property type="nucleotide sequence ID" value="NM_153646.4"/>
</dbReference>
<dbReference type="RefSeq" id="NP_705933.2">
    <molecule id="Q8NFF2-3"/>
    <property type="nucleotide sequence ID" value="NM_153647.4"/>
</dbReference>
<dbReference type="RefSeq" id="NP_705934.1">
    <molecule id="Q8NFF2-2"/>
    <property type="nucleotide sequence ID" value="NM_153648.4"/>
</dbReference>
<dbReference type="RefSeq" id="XP_011534743.1">
    <property type="nucleotide sequence ID" value="XM_011536441.2"/>
</dbReference>
<dbReference type="RefSeq" id="XP_011534744.1">
    <property type="nucleotide sequence ID" value="XM_011536442.2"/>
</dbReference>
<dbReference type="BioGRID" id="125813">
    <property type="interactions" value="2"/>
</dbReference>
<dbReference type="FunCoup" id="Q8NFF2">
    <property type="interactions" value="483"/>
</dbReference>
<dbReference type="STRING" id="9606.ENSP00000431840"/>
<dbReference type="ChEMBL" id="CHEMBL5209636"/>
<dbReference type="TCDB" id="2.A.19.4.5">
    <property type="family name" value="the ca(2+):cation antiporter (caca) family"/>
</dbReference>
<dbReference type="GlyCosmos" id="Q8NFF2">
    <property type="glycosylation" value="2 sites, No reported glycans"/>
</dbReference>
<dbReference type="GlyGen" id="Q8NFF2">
    <property type="glycosylation" value="2 sites, 1 N-linked glycan (1 site)"/>
</dbReference>
<dbReference type="iPTMnet" id="Q8NFF2"/>
<dbReference type="PhosphoSitePlus" id="Q8NFF2"/>
<dbReference type="BioMuta" id="SLC24A4"/>
<dbReference type="DMDM" id="341941166"/>
<dbReference type="MassIVE" id="Q8NFF2"/>
<dbReference type="PaxDb" id="9606-ENSP00000431840"/>
<dbReference type="PeptideAtlas" id="Q8NFF2"/>
<dbReference type="ProteomicsDB" id="73293">
    <molecule id="Q8NFF2-1"/>
</dbReference>
<dbReference type="ProteomicsDB" id="73294">
    <molecule id="Q8NFF2-2"/>
</dbReference>
<dbReference type="ProteomicsDB" id="73295">
    <molecule id="Q8NFF2-3"/>
</dbReference>
<dbReference type="ProteomicsDB" id="73296">
    <molecule id="Q8NFF2-4"/>
</dbReference>
<dbReference type="ABCD" id="Q8NFF2">
    <property type="antibodies" value="1 sequenced antibody"/>
</dbReference>
<dbReference type="Antibodypedia" id="47402">
    <property type="antibodies" value="106 antibodies from 23 providers"/>
</dbReference>
<dbReference type="DNASU" id="123041"/>
<dbReference type="Ensembl" id="ENST00000393265.6">
    <molecule id="Q8NFF2-2"/>
    <property type="protein sequence ID" value="ENSP00000376948.2"/>
    <property type="gene ID" value="ENSG00000140090.18"/>
</dbReference>
<dbReference type="Ensembl" id="ENST00000531433.5">
    <molecule id="Q8NFF2-3"/>
    <property type="protein sequence ID" value="ENSP00000433302.1"/>
    <property type="gene ID" value="ENSG00000140090.18"/>
</dbReference>
<dbReference type="Ensembl" id="ENST00000532405.6">
    <molecule id="Q8NFF2-1"/>
    <property type="protein sequence ID" value="ENSP00000431840.1"/>
    <property type="gene ID" value="ENSG00000140090.18"/>
</dbReference>
<dbReference type="Ensembl" id="ENST00000676001.1">
    <molecule id="Q8NFF2-1"/>
    <property type="protein sequence ID" value="ENSP00000502715.1"/>
    <property type="gene ID" value="ENSG00000140090.18"/>
</dbReference>
<dbReference type="GeneID" id="123041"/>
<dbReference type="KEGG" id="hsa:123041"/>
<dbReference type="MANE-Select" id="ENST00000532405.6">
    <property type="protein sequence ID" value="ENSP00000431840.1"/>
    <property type="RefSeq nucleotide sequence ID" value="NM_153646.4"/>
    <property type="RefSeq protein sequence ID" value="NP_705932.2"/>
</dbReference>
<dbReference type="UCSC" id="uc001yai.4">
    <molecule id="Q8NFF2-1"/>
    <property type="organism name" value="human"/>
</dbReference>
<dbReference type="AGR" id="HGNC:10978"/>
<dbReference type="CTD" id="123041"/>
<dbReference type="DisGeNET" id="123041"/>
<dbReference type="GeneCards" id="SLC24A4"/>
<dbReference type="HGNC" id="HGNC:10978">
    <property type="gene designation" value="SLC24A4"/>
</dbReference>
<dbReference type="HPA" id="ENSG00000140090">
    <property type="expression patterns" value="Group enriched (choroid plexus, retina)"/>
</dbReference>
<dbReference type="MalaCards" id="SLC24A4"/>
<dbReference type="MIM" id="210750">
    <property type="type" value="phenotype"/>
</dbReference>
<dbReference type="MIM" id="609840">
    <property type="type" value="gene"/>
</dbReference>
<dbReference type="MIM" id="615887">
    <property type="type" value="phenotype"/>
</dbReference>
<dbReference type="neXtProt" id="NX_Q8NFF2"/>
<dbReference type="NIAGADS" id="ENSG00000140090"/>
<dbReference type="OpenTargets" id="ENSG00000140090"/>
<dbReference type="Orphanet" id="100032">
    <property type="disease" value="Hypocalcified amelogenesis imperfecta"/>
</dbReference>
<dbReference type="Orphanet" id="100033">
    <property type="disease" value="Hypomaturation amelogenesis imperfecta"/>
</dbReference>
<dbReference type="PharmGKB" id="PA35854"/>
<dbReference type="VEuPathDB" id="HostDB:ENSG00000140090"/>
<dbReference type="eggNOG" id="KOG1307">
    <property type="taxonomic scope" value="Eukaryota"/>
</dbReference>
<dbReference type="GeneTree" id="ENSGT01030000234532"/>
<dbReference type="HOGENOM" id="CLU_007948_5_2_1"/>
<dbReference type="InParanoid" id="Q8NFF2"/>
<dbReference type="OMA" id="LFGSWGH"/>
<dbReference type="OrthoDB" id="2127281at2759"/>
<dbReference type="PAN-GO" id="Q8NFF2">
    <property type="GO annotations" value="6 GO annotations based on evolutionary models"/>
</dbReference>
<dbReference type="PhylomeDB" id="Q8NFF2"/>
<dbReference type="TreeFam" id="TF318759"/>
<dbReference type="PathwayCommons" id="Q8NFF2"/>
<dbReference type="Reactome" id="R-HSA-425561">
    <property type="pathway name" value="Sodium/Calcium exchangers"/>
</dbReference>
<dbReference type="Reactome" id="R-HSA-5619055">
    <property type="pathway name" value="Defective SLC24A4 causes hypomineralized amelogenesis imperfecta (AI)"/>
</dbReference>
<dbReference type="SIGNOR" id="Q8NFF2"/>
<dbReference type="BioGRID-ORCS" id="123041">
    <property type="hits" value="9 hits in 1141 CRISPR screens"/>
</dbReference>
<dbReference type="GenomeRNAi" id="123041"/>
<dbReference type="Pharos" id="Q8NFF2">
    <property type="development level" value="Tbio"/>
</dbReference>
<dbReference type="PRO" id="PR:Q8NFF2"/>
<dbReference type="Proteomes" id="UP000005640">
    <property type="component" value="Chromosome 14"/>
</dbReference>
<dbReference type="RNAct" id="Q8NFF2">
    <property type="molecule type" value="protein"/>
</dbReference>
<dbReference type="Bgee" id="ENSG00000140090">
    <property type="expression patterns" value="Expressed in monocyte and 118 other cell types or tissues"/>
</dbReference>
<dbReference type="ExpressionAtlas" id="Q8NFF2">
    <property type="expression patterns" value="baseline and differential"/>
</dbReference>
<dbReference type="GO" id="GO:0016324">
    <property type="term" value="C:apical plasma membrane"/>
    <property type="evidence" value="ECO:0000250"/>
    <property type="project" value="ARUK-UCL"/>
</dbReference>
<dbReference type="GO" id="GO:0120199">
    <property type="term" value="C:cone photoreceptor outer segment"/>
    <property type="evidence" value="ECO:0000250"/>
    <property type="project" value="ARUK-UCL"/>
</dbReference>
<dbReference type="GO" id="GO:0005737">
    <property type="term" value="C:cytoplasm"/>
    <property type="evidence" value="ECO:0000250"/>
    <property type="project" value="UniProtKB"/>
</dbReference>
<dbReference type="GO" id="GO:0016020">
    <property type="term" value="C:membrane"/>
    <property type="evidence" value="ECO:0000250"/>
    <property type="project" value="UniProtKB"/>
</dbReference>
<dbReference type="GO" id="GO:0005886">
    <property type="term" value="C:plasma membrane"/>
    <property type="evidence" value="ECO:0000314"/>
    <property type="project" value="ARUK-UCL"/>
</dbReference>
<dbReference type="GO" id="GO:0031982">
    <property type="term" value="C:vesicle"/>
    <property type="evidence" value="ECO:0000250"/>
    <property type="project" value="ARUK-UCL"/>
</dbReference>
<dbReference type="GO" id="GO:0005262">
    <property type="term" value="F:calcium channel activity"/>
    <property type="evidence" value="ECO:0000318"/>
    <property type="project" value="GO_Central"/>
</dbReference>
<dbReference type="GO" id="GO:0008273">
    <property type="term" value="F:calcium, potassium:sodium antiporter activity"/>
    <property type="evidence" value="ECO:0000314"/>
    <property type="project" value="ARUK-UCL"/>
</dbReference>
<dbReference type="GO" id="GO:0048306">
    <property type="term" value="F:calcium-dependent protein binding"/>
    <property type="evidence" value="ECO:0000250"/>
    <property type="project" value="ARUK-UCL"/>
</dbReference>
<dbReference type="GO" id="GO:0005516">
    <property type="term" value="F:calmodulin binding"/>
    <property type="evidence" value="ECO:0000250"/>
    <property type="project" value="ARUK-UCL"/>
</dbReference>
<dbReference type="GO" id="GO:0015293">
    <property type="term" value="F:symporter activity"/>
    <property type="evidence" value="ECO:0007669"/>
    <property type="project" value="UniProtKB-KW"/>
</dbReference>
<dbReference type="GO" id="GO:0097186">
    <property type="term" value="P:amelogenesis"/>
    <property type="evidence" value="ECO:0000250"/>
    <property type="project" value="UniProtKB"/>
</dbReference>
<dbReference type="GO" id="GO:1990034">
    <property type="term" value="P:calcium ion export across plasma membrane"/>
    <property type="evidence" value="ECO:0000250"/>
    <property type="project" value="ARUK-UCL"/>
</dbReference>
<dbReference type="GO" id="GO:0055074">
    <property type="term" value="P:calcium ion homeostasis"/>
    <property type="evidence" value="ECO:0000250"/>
    <property type="project" value="ARUK-UCL"/>
</dbReference>
<dbReference type="GO" id="GO:0098703">
    <property type="term" value="P:calcium ion import across plasma membrane"/>
    <property type="evidence" value="ECO:0000250"/>
    <property type="project" value="ARUK-UCL"/>
</dbReference>
<dbReference type="GO" id="GO:0070588">
    <property type="term" value="P:calcium ion transmembrane transport"/>
    <property type="evidence" value="ECO:0000314"/>
    <property type="project" value="ARUK-UCL"/>
</dbReference>
<dbReference type="GO" id="GO:0071486">
    <property type="term" value="P:cellular response to high light intensity"/>
    <property type="evidence" value="ECO:0007669"/>
    <property type="project" value="Ensembl"/>
</dbReference>
<dbReference type="GO" id="GO:0036368">
    <property type="term" value="P:cone photoresponse recovery"/>
    <property type="evidence" value="ECO:0000250"/>
    <property type="project" value="ARUK-UCL"/>
</dbReference>
<dbReference type="GO" id="GO:0050911">
    <property type="term" value="P:detection of chemical stimulus involved in sensory perception of smell"/>
    <property type="evidence" value="ECO:0000250"/>
    <property type="project" value="ARUK-UCL"/>
</dbReference>
<dbReference type="GO" id="GO:0042756">
    <property type="term" value="P:drinking behavior"/>
    <property type="evidence" value="ECO:0000250"/>
    <property type="project" value="ARUK-UCL"/>
</dbReference>
<dbReference type="GO" id="GO:0070166">
    <property type="term" value="P:enamel mineralization"/>
    <property type="evidence" value="ECO:0000304"/>
    <property type="project" value="ARUK-UCL"/>
</dbReference>
<dbReference type="GO" id="GO:0006874">
    <property type="term" value="P:intracellular calcium ion homeostasis"/>
    <property type="evidence" value="ECO:0000314"/>
    <property type="project" value="ARUK-UCL"/>
</dbReference>
<dbReference type="GO" id="GO:0086009">
    <property type="term" value="P:membrane repolarization"/>
    <property type="evidence" value="ECO:0000250"/>
    <property type="project" value="ARUK-UCL"/>
</dbReference>
<dbReference type="GO" id="GO:0006811">
    <property type="term" value="P:monoatomic ion transport"/>
    <property type="evidence" value="ECO:0000304"/>
    <property type="project" value="Reactome"/>
</dbReference>
<dbReference type="GO" id="GO:0050849">
    <property type="term" value="P:negative regulation of calcium-mediated signaling"/>
    <property type="evidence" value="ECO:0000250"/>
    <property type="project" value="ARUK-UCL"/>
</dbReference>
<dbReference type="GO" id="GO:0021630">
    <property type="term" value="P:olfactory nerve maturation"/>
    <property type="evidence" value="ECO:0000250"/>
    <property type="project" value="ARUK-UCL"/>
</dbReference>
<dbReference type="GO" id="GO:0007602">
    <property type="term" value="P:phototransduction"/>
    <property type="evidence" value="ECO:0000250"/>
    <property type="project" value="ARUK-UCL"/>
</dbReference>
<dbReference type="GO" id="GO:0010628">
    <property type="term" value="P:positive regulation of gene expression"/>
    <property type="evidence" value="ECO:0007669"/>
    <property type="project" value="Ensembl"/>
</dbReference>
<dbReference type="GO" id="GO:0071805">
    <property type="term" value="P:potassium ion transmembrane transport"/>
    <property type="evidence" value="ECO:0000314"/>
    <property type="project" value="ARUK-UCL"/>
</dbReference>
<dbReference type="GO" id="GO:1903998">
    <property type="term" value="P:regulation of eating behavior"/>
    <property type="evidence" value="ECO:0000250"/>
    <property type="project" value="ARUK-UCL"/>
</dbReference>
<dbReference type="GO" id="GO:0008277">
    <property type="term" value="P:regulation of G protein-coupled receptor signaling pathway"/>
    <property type="evidence" value="ECO:0000250"/>
    <property type="project" value="ARUK-UCL"/>
</dbReference>
<dbReference type="GO" id="GO:0009644">
    <property type="term" value="P:response to high light intensity"/>
    <property type="evidence" value="ECO:0000250"/>
    <property type="project" value="ARUK-UCL"/>
</dbReference>
<dbReference type="GO" id="GO:1990680">
    <property type="term" value="P:response to melanocyte-stimulating hormone"/>
    <property type="evidence" value="ECO:0000250"/>
    <property type="project" value="ARUK-UCL"/>
</dbReference>
<dbReference type="GO" id="GO:1990834">
    <property type="term" value="P:response to odorant"/>
    <property type="evidence" value="ECO:0000250"/>
    <property type="project" value="ARUK-UCL"/>
</dbReference>
<dbReference type="GO" id="GO:0007608">
    <property type="term" value="P:sensory perception of smell"/>
    <property type="evidence" value="ECO:0000250"/>
    <property type="project" value="UniProtKB"/>
</dbReference>
<dbReference type="GO" id="GO:0035725">
    <property type="term" value="P:sodium ion transmembrane transport"/>
    <property type="evidence" value="ECO:0000314"/>
    <property type="project" value="ARUK-UCL"/>
</dbReference>
<dbReference type="FunFam" id="1.20.1420.30:FF:000005">
    <property type="entry name" value="sodium/potassium/calcium exchanger 3 isoform X1"/>
    <property type="match status" value="1"/>
</dbReference>
<dbReference type="FunFam" id="1.20.1420.30:FF:000006">
    <property type="entry name" value="sodium/potassium/calcium exchanger 4 isoform X1"/>
    <property type="match status" value="1"/>
</dbReference>
<dbReference type="Gene3D" id="1.20.1420.30">
    <property type="entry name" value="NCX, central ion-binding region"/>
    <property type="match status" value="2"/>
</dbReference>
<dbReference type="InterPro" id="IPR004481">
    <property type="entry name" value="K/Na/Ca-exchanger"/>
</dbReference>
<dbReference type="InterPro" id="IPR004837">
    <property type="entry name" value="NaCa_Exmemb"/>
</dbReference>
<dbReference type="InterPro" id="IPR044880">
    <property type="entry name" value="NCX_ion-bd_dom_sf"/>
</dbReference>
<dbReference type="NCBIfam" id="TIGR00367">
    <property type="entry name" value="calcium/sodium antiporter"/>
    <property type="match status" value="1"/>
</dbReference>
<dbReference type="PANTHER" id="PTHR10846">
    <property type="entry name" value="SODIUM/POTASSIUM/CALCIUM EXCHANGER"/>
    <property type="match status" value="1"/>
</dbReference>
<dbReference type="PANTHER" id="PTHR10846:SF21">
    <property type="entry name" value="SODIUM_POTASSIUM_CALCIUM EXCHANGER 4"/>
    <property type="match status" value="1"/>
</dbReference>
<dbReference type="Pfam" id="PF01699">
    <property type="entry name" value="Na_Ca_ex"/>
    <property type="match status" value="2"/>
</dbReference>
<evidence type="ECO:0000250" key="1">
    <source>
        <dbReference type="UniProtKB" id="Q8CGQ8"/>
    </source>
</evidence>
<evidence type="ECO:0000255" key="2"/>
<evidence type="ECO:0000256" key="3">
    <source>
        <dbReference type="SAM" id="MobiDB-lite"/>
    </source>
</evidence>
<evidence type="ECO:0000269" key="4">
    <source>
    </source>
</evidence>
<evidence type="ECO:0000269" key="5">
    <source>
    </source>
</evidence>
<evidence type="ECO:0000269" key="6">
    <source>
    </source>
</evidence>
<evidence type="ECO:0000269" key="7">
    <source>
    </source>
</evidence>
<evidence type="ECO:0000269" key="8">
    <source>
    </source>
</evidence>
<evidence type="ECO:0000269" key="9">
    <source>
    </source>
</evidence>
<evidence type="ECO:0000269" key="10">
    <source>
    </source>
</evidence>
<evidence type="ECO:0000269" key="11">
    <source>
    </source>
</evidence>
<evidence type="ECO:0000269" key="12">
    <source>
    </source>
</evidence>
<evidence type="ECO:0000303" key="13">
    <source>
    </source>
</evidence>
<evidence type="ECO:0000303" key="14">
    <source>
    </source>
</evidence>
<evidence type="ECO:0000305" key="15"/>
<evidence type="ECO:0000312" key="16">
    <source>
        <dbReference type="HGNC" id="HGNC:10978"/>
    </source>
</evidence>
<comment type="function">
    <text evidence="1 4 6 7 9">Calcium, potassium:sodium antiporter that transports 1 Ca(2+) and 1 K(+) in exchange for 4 Na(+) (PubMed:12379639, PubMed:26631410). Controls the rapid response termination and proper regulation of adaptation in olfactory sensory neurons (OSNs) which subsequently influences how odor information is encoded and perceived (By similarity). May play a role in calcium transport during amelogenesis (PubMed:23375655, PubMed:24621671).</text>
</comment>
<comment type="catalytic activity">
    <reaction evidence="4 9">
        <text>Ca(2+)(out) + K(+)(out) + 4 Na(+)(in) = Ca(2+)(in) + K(+)(in) + 4 Na(+)(out)</text>
        <dbReference type="Rhea" id="RHEA:69967"/>
        <dbReference type="ChEBI" id="CHEBI:29101"/>
        <dbReference type="ChEBI" id="CHEBI:29103"/>
        <dbReference type="ChEBI" id="CHEBI:29108"/>
    </reaction>
</comment>
<comment type="subcellular location">
    <subcellularLocation>
        <location evidence="9">Cell membrane</location>
        <topology evidence="2">Multi-pass membrane protein</topology>
    </subcellularLocation>
    <subcellularLocation>
        <location evidence="1">Cytoplasm</location>
    </subcellularLocation>
</comment>
<comment type="alternative products">
    <event type="alternative splicing"/>
    <isoform>
        <id>Q8NFF2-1</id>
        <name>1</name>
        <sequence type="displayed"/>
    </isoform>
    <isoform>
        <id>Q8NFF2-2</id>
        <name>2</name>
        <sequence type="described" ref="VSP_008369"/>
    </isoform>
    <isoform>
        <id>Q8NFF2-3</id>
        <name>3</name>
        <sequence type="described" ref="VSP_008372"/>
    </isoform>
    <isoform>
        <id>Q8NFF2-4</id>
        <name>4</name>
        <sequence type="described" ref="VSP_008370 VSP_008371"/>
    </isoform>
</comment>
<comment type="tissue specificity">
    <text evidence="4">Expressed abundantly in all regions of the brain, aorta, lung and thymus (PubMed:12379639). Expressed at lower levels in the stomach and intestine (PubMed:12379639).</text>
</comment>
<comment type="polymorphism">
    <text evidence="5">Genetic variants in SLC24A4 define the skin/hair/eye pigmentation variation locus 6 (SHEP6) [MIM:210750]. Hair, eye and skin pigmentation are among the most visible examples of human phenotypic variation, with a broad normal range that is subject to substantial geographic stratification. In the case of skin, individuals tend to have lighter pigmentation with increasing distance from the equator. By contrast, the majority of variation in human eye and hair color is found among individuals of European ancestry, with most other human populations fixed for brown eyes and black hair.</text>
</comment>
<comment type="disease" evidence="6 7 8 10 11 12">
    <disease id="DI-04153">
        <name>Amelogenesis imperfecta, hypomaturation type, 2A5</name>
        <acronym>AI2A5</acronym>
        <description>A defect of enamel formation. The disorder involves both primary and secondary dentitions. The teeth have a shiny agar jelly appearance and the enamel is softer than normal. Brown pigment is present in middle layers of enamel.</description>
        <dbReference type="MIM" id="615887"/>
    </disease>
    <text>The disease is caused by variants affecting the gene represented in this entry.</text>
</comment>
<comment type="similarity">
    <text evidence="15">Belongs to the Ca(2+):cation antiporter (CaCA) (TC 2.A.19) family. SLC24A subfamily.</text>
</comment>
<comment type="caution">
    <text evidence="15">It is uncertain whether Met-1 or Met-18 is the initiator.</text>
</comment>
<comment type="sequence caution" evidence="15">
    <conflict type="erroneous initiation">
        <sequence resource="EMBL-CDS" id="AAH69653"/>
    </conflict>
    <text>Truncated N-terminus.</text>
</comment>
<comment type="sequence caution" evidence="15">
    <conflict type="erroneous initiation">
        <sequence resource="EMBL-CDS" id="AAM76070"/>
    </conflict>
    <text>Truncated N-terminus.</text>
</comment>
<comment type="sequence caution" evidence="15">
    <conflict type="erroneous initiation">
        <sequence resource="EMBL-CDS" id="AAM76071"/>
    </conflict>
    <text>Truncated N-terminus.</text>
</comment>
<comment type="sequence caution" evidence="15">
    <conflict type="miscellaneous discrepancy">
        <sequence resource="EMBL-CDS" id="BAC04715"/>
    </conflict>
    <text>Probable cloning artifact.</text>
</comment>
<comment type="sequence caution" evidence="15">
    <conflict type="erroneous initiation">
        <sequence resource="EMBL-CDS" id="CAD38903"/>
    </conflict>
    <text>Truncated N-terminus.</text>
</comment>
<reference key="1">
    <citation type="journal article" date="2002" name="J. Biol. Chem.">
        <title>Molecular cloning of a fourth member of the potassium-dependent sodium-calcium exchanger gene family, NCKX4.</title>
        <authorList>
            <person name="Li X.-F."/>
            <person name="Kraev A.S."/>
            <person name="Lytton J."/>
        </authorList>
    </citation>
    <scope>NUCLEOTIDE SEQUENCE [MRNA] (ISOFORM 2)</scope>
    <scope>NUCLEOTIDE SEQUENCE [MRNA] OF 10-622 (ISOFORMS 1 AND 3)</scope>
    <scope>FUNCTION</scope>
    <scope>TISSUE SPECIFICITY</scope>
    <scope>TRANSPORTER ACTIVITY</scope>
</reference>
<reference key="2">
    <citation type="journal article" date="2004" name="Nat. Genet.">
        <title>Complete sequencing and characterization of 21,243 full-length human cDNAs.</title>
        <authorList>
            <person name="Ota T."/>
            <person name="Suzuki Y."/>
            <person name="Nishikawa T."/>
            <person name="Otsuki T."/>
            <person name="Sugiyama T."/>
            <person name="Irie R."/>
            <person name="Wakamatsu A."/>
            <person name="Hayashi K."/>
            <person name="Sato H."/>
            <person name="Nagai K."/>
            <person name="Kimura K."/>
            <person name="Makita H."/>
            <person name="Sekine M."/>
            <person name="Obayashi M."/>
            <person name="Nishi T."/>
            <person name="Shibahara T."/>
            <person name="Tanaka T."/>
            <person name="Ishii S."/>
            <person name="Yamamoto J."/>
            <person name="Saito K."/>
            <person name="Kawai Y."/>
            <person name="Isono Y."/>
            <person name="Nakamura Y."/>
            <person name="Nagahari K."/>
            <person name="Murakami K."/>
            <person name="Yasuda T."/>
            <person name="Iwayanagi T."/>
            <person name="Wagatsuma M."/>
            <person name="Shiratori A."/>
            <person name="Sudo H."/>
            <person name="Hosoiri T."/>
            <person name="Kaku Y."/>
            <person name="Kodaira H."/>
            <person name="Kondo H."/>
            <person name="Sugawara M."/>
            <person name="Takahashi M."/>
            <person name="Kanda K."/>
            <person name="Yokoi T."/>
            <person name="Furuya T."/>
            <person name="Kikkawa E."/>
            <person name="Omura Y."/>
            <person name="Abe K."/>
            <person name="Kamihara K."/>
            <person name="Katsuta N."/>
            <person name="Sato K."/>
            <person name="Tanikawa M."/>
            <person name="Yamazaki M."/>
            <person name="Ninomiya K."/>
            <person name="Ishibashi T."/>
            <person name="Yamashita H."/>
            <person name="Murakawa K."/>
            <person name="Fujimori K."/>
            <person name="Tanai H."/>
            <person name="Kimata M."/>
            <person name="Watanabe M."/>
            <person name="Hiraoka S."/>
            <person name="Chiba Y."/>
            <person name="Ishida S."/>
            <person name="Ono Y."/>
            <person name="Takiguchi S."/>
            <person name="Watanabe S."/>
            <person name="Yosida M."/>
            <person name="Hotuta T."/>
            <person name="Kusano J."/>
            <person name="Kanehori K."/>
            <person name="Takahashi-Fujii A."/>
            <person name="Hara H."/>
            <person name="Tanase T.-O."/>
            <person name="Nomura Y."/>
            <person name="Togiya S."/>
            <person name="Komai F."/>
            <person name="Hara R."/>
            <person name="Takeuchi K."/>
            <person name="Arita M."/>
            <person name="Imose N."/>
            <person name="Musashino K."/>
            <person name="Yuuki H."/>
            <person name="Oshima A."/>
            <person name="Sasaki N."/>
            <person name="Aotsuka S."/>
            <person name="Yoshikawa Y."/>
            <person name="Matsunawa H."/>
            <person name="Ichihara T."/>
            <person name="Shiohata N."/>
            <person name="Sano S."/>
            <person name="Moriya S."/>
            <person name="Momiyama H."/>
            <person name="Satoh N."/>
            <person name="Takami S."/>
            <person name="Terashima Y."/>
            <person name="Suzuki O."/>
            <person name="Nakagawa S."/>
            <person name="Senoh A."/>
            <person name="Mizoguchi H."/>
            <person name="Goto Y."/>
            <person name="Shimizu F."/>
            <person name="Wakebe H."/>
            <person name="Hishigaki H."/>
            <person name="Watanabe T."/>
            <person name="Sugiyama A."/>
            <person name="Takemoto M."/>
            <person name="Kawakami B."/>
            <person name="Yamazaki M."/>
            <person name="Watanabe K."/>
            <person name="Kumagai A."/>
            <person name="Itakura S."/>
            <person name="Fukuzumi Y."/>
            <person name="Fujimori Y."/>
            <person name="Komiyama M."/>
            <person name="Tashiro H."/>
            <person name="Tanigami A."/>
            <person name="Fujiwara T."/>
            <person name="Ono T."/>
            <person name="Yamada K."/>
            <person name="Fujii Y."/>
            <person name="Ozaki K."/>
            <person name="Hirao M."/>
            <person name="Ohmori Y."/>
            <person name="Kawabata A."/>
            <person name="Hikiji T."/>
            <person name="Kobatake N."/>
            <person name="Inagaki H."/>
            <person name="Ikema Y."/>
            <person name="Okamoto S."/>
            <person name="Okitani R."/>
            <person name="Kawakami T."/>
            <person name="Noguchi S."/>
            <person name="Itoh T."/>
            <person name="Shigeta K."/>
            <person name="Senba T."/>
            <person name="Matsumura K."/>
            <person name="Nakajima Y."/>
            <person name="Mizuno T."/>
            <person name="Morinaga M."/>
            <person name="Sasaki M."/>
            <person name="Togashi T."/>
            <person name="Oyama M."/>
            <person name="Hata H."/>
            <person name="Watanabe M."/>
            <person name="Komatsu T."/>
            <person name="Mizushima-Sugano J."/>
            <person name="Satoh T."/>
            <person name="Shirai Y."/>
            <person name="Takahashi Y."/>
            <person name="Nakagawa K."/>
            <person name="Okumura K."/>
            <person name="Nagase T."/>
            <person name="Nomura N."/>
            <person name="Kikuchi H."/>
            <person name="Masuho Y."/>
            <person name="Yamashita R."/>
            <person name="Nakai K."/>
            <person name="Yada T."/>
            <person name="Nakamura Y."/>
            <person name="Ohara O."/>
            <person name="Isogai T."/>
            <person name="Sugano S."/>
        </authorList>
    </citation>
    <scope>NUCLEOTIDE SEQUENCE [LARGE SCALE MRNA] (ISOFORM 3)</scope>
    <scope>NUCLEOTIDE SEQUENCE [LARGE SCALE MRNA] OF 1-474 (ISOFORM 4)</scope>
    <source>
        <tissue>Brain</tissue>
    </source>
</reference>
<reference key="3">
    <citation type="journal article" date="2003" name="Nature">
        <title>The DNA sequence and analysis of human chromosome 14.</title>
        <authorList>
            <person name="Heilig R."/>
            <person name="Eckenberg R."/>
            <person name="Petit J.-L."/>
            <person name="Fonknechten N."/>
            <person name="Da Silva C."/>
            <person name="Cattolico L."/>
            <person name="Levy M."/>
            <person name="Barbe V."/>
            <person name="De Berardinis V."/>
            <person name="Ureta-Vidal A."/>
            <person name="Pelletier E."/>
            <person name="Vico V."/>
            <person name="Anthouard V."/>
            <person name="Rowen L."/>
            <person name="Madan A."/>
            <person name="Qin S."/>
            <person name="Sun H."/>
            <person name="Du H."/>
            <person name="Pepin K."/>
            <person name="Artiguenave F."/>
            <person name="Robert C."/>
            <person name="Cruaud C."/>
            <person name="Bruels T."/>
            <person name="Jaillon O."/>
            <person name="Friedlander L."/>
            <person name="Samson G."/>
            <person name="Brottier P."/>
            <person name="Cure S."/>
            <person name="Segurens B."/>
            <person name="Aniere F."/>
            <person name="Samain S."/>
            <person name="Crespeau H."/>
            <person name="Abbasi N."/>
            <person name="Aiach N."/>
            <person name="Boscus D."/>
            <person name="Dickhoff R."/>
            <person name="Dors M."/>
            <person name="Dubois I."/>
            <person name="Friedman C."/>
            <person name="Gouyvenoux M."/>
            <person name="James R."/>
            <person name="Madan A."/>
            <person name="Mairey-Estrada B."/>
            <person name="Mangenot S."/>
            <person name="Martins N."/>
            <person name="Menard M."/>
            <person name="Oztas S."/>
            <person name="Ratcliffe A."/>
            <person name="Shaffer T."/>
            <person name="Trask B."/>
            <person name="Vacherie B."/>
            <person name="Bellemere C."/>
            <person name="Belser C."/>
            <person name="Besnard-Gonnet M."/>
            <person name="Bartol-Mavel D."/>
            <person name="Boutard M."/>
            <person name="Briez-Silla S."/>
            <person name="Combette S."/>
            <person name="Dufosse-Laurent V."/>
            <person name="Ferron C."/>
            <person name="Lechaplais C."/>
            <person name="Louesse C."/>
            <person name="Muselet D."/>
            <person name="Magdelenat G."/>
            <person name="Pateau E."/>
            <person name="Petit E."/>
            <person name="Sirvain-Trukniewicz P."/>
            <person name="Trybou A."/>
            <person name="Vega-Czarny N."/>
            <person name="Bataille E."/>
            <person name="Bluet E."/>
            <person name="Bordelais I."/>
            <person name="Dubois M."/>
            <person name="Dumont C."/>
            <person name="Guerin T."/>
            <person name="Haffray S."/>
            <person name="Hammadi R."/>
            <person name="Muanga J."/>
            <person name="Pellouin V."/>
            <person name="Robert D."/>
            <person name="Wunderle E."/>
            <person name="Gauguet G."/>
            <person name="Roy A."/>
            <person name="Sainte-Marthe L."/>
            <person name="Verdier J."/>
            <person name="Verdier-Discala C."/>
            <person name="Hillier L.W."/>
            <person name="Fulton L."/>
            <person name="McPherson J."/>
            <person name="Matsuda F."/>
            <person name="Wilson R."/>
            <person name="Scarpelli C."/>
            <person name="Gyapay G."/>
            <person name="Wincker P."/>
            <person name="Saurin W."/>
            <person name="Quetier F."/>
            <person name="Waterston R."/>
            <person name="Hood L."/>
            <person name="Weissenbach J."/>
        </authorList>
    </citation>
    <scope>NUCLEOTIDE SEQUENCE [LARGE SCALE GENOMIC DNA]</scope>
</reference>
<reference key="4">
    <citation type="submission" date="2005-07" db="EMBL/GenBank/DDBJ databases">
        <authorList>
            <person name="Mural R.J."/>
            <person name="Istrail S."/>
            <person name="Sutton G.G."/>
            <person name="Florea L."/>
            <person name="Halpern A.L."/>
            <person name="Mobarry C.M."/>
            <person name="Lippert R."/>
            <person name="Walenz B."/>
            <person name="Shatkay H."/>
            <person name="Dew I."/>
            <person name="Miller J.R."/>
            <person name="Flanigan M.J."/>
            <person name="Edwards N.J."/>
            <person name="Bolanos R."/>
            <person name="Fasulo D."/>
            <person name="Halldorsson B.V."/>
            <person name="Hannenhalli S."/>
            <person name="Turner R."/>
            <person name="Yooseph S."/>
            <person name="Lu F."/>
            <person name="Nusskern D.R."/>
            <person name="Shue B.C."/>
            <person name="Zheng X.H."/>
            <person name="Zhong F."/>
            <person name="Delcher A.L."/>
            <person name="Huson D.H."/>
            <person name="Kravitz S.A."/>
            <person name="Mouchard L."/>
            <person name="Reinert K."/>
            <person name="Remington K.A."/>
            <person name="Clark A.G."/>
            <person name="Waterman M.S."/>
            <person name="Eichler E.E."/>
            <person name="Adams M.D."/>
            <person name="Hunkapiller M.W."/>
            <person name="Myers E.W."/>
            <person name="Venter J.C."/>
        </authorList>
    </citation>
    <scope>NUCLEOTIDE SEQUENCE [LARGE SCALE GENOMIC DNA]</scope>
</reference>
<reference key="5">
    <citation type="journal article" date="2004" name="Genome Res.">
        <title>The status, quality, and expansion of the NIH full-length cDNA project: the Mammalian Gene Collection (MGC).</title>
        <authorList>
            <consortium name="The MGC Project Team"/>
        </authorList>
    </citation>
    <scope>NUCLEOTIDE SEQUENCE [LARGE SCALE MRNA] OF 10-622 (ISOFORM 1)</scope>
</reference>
<reference key="6">
    <citation type="journal article" date="2007" name="BMC Genomics">
        <title>The full-ORF clone resource of the German cDNA consortium.</title>
        <authorList>
            <person name="Bechtel S."/>
            <person name="Rosenfelder H."/>
            <person name="Duda A."/>
            <person name="Schmidt C.P."/>
            <person name="Ernst U."/>
            <person name="Wellenreuther R."/>
            <person name="Mehrle A."/>
            <person name="Schuster C."/>
            <person name="Bahr A."/>
            <person name="Bloecker H."/>
            <person name="Heubner D."/>
            <person name="Hoerlein A."/>
            <person name="Michel G."/>
            <person name="Wedler H."/>
            <person name="Koehrer K."/>
            <person name="Ottenwaelder B."/>
            <person name="Poustka A."/>
            <person name="Wiemann S."/>
            <person name="Schupp I."/>
        </authorList>
    </citation>
    <scope>NUCLEOTIDE SEQUENCE [LARGE SCALE MRNA] OF 294-622 (ISOFORM 1)</scope>
    <source>
        <tissue>Testis</tissue>
    </source>
</reference>
<reference key="7">
    <citation type="journal article" date="2007" name="Nat. Genet.">
        <title>Genetic determinants of hair, eye and skin pigmentation in Europeans.</title>
        <authorList>
            <person name="Sulem P."/>
            <person name="Gudbjartsson D.F."/>
            <person name="Stacey S.N."/>
            <person name="Helgason A."/>
            <person name="Rafnar T."/>
            <person name="Magnusson K.P."/>
            <person name="Manolescu A."/>
            <person name="Karason A."/>
            <person name="Palsson A."/>
            <person name="Thorleifsson G."/>
            <person name="Jakobsdottir M."/>
            <person name="Steinberg S."/>
            <person name="Palsson S."/>
            <person name="Jonasson F."/>
            <person name="Sigurgeirsson B."/>
            <person name="Thorisdottir K."/>
            <person name="Ragnarsson R."/>
            <person name="Benediktsdottir K.R."/>
            <person name="Aben K.K."/>
            <person name="Kiemeney L.A."/>
            <person name="Olafsson J.H."/>
            <person name="Gulcher J."/>
            <person name="Kong A."/>
            <person name="Thorsteinsdottir U."/>
            <person name="Stefansson K."/>
        </authorList>
    </citation>
    <scope>INVOLVEMENT IN SHEP6</scope>
    <scope>POLYMORPHISM</scope>
</reference>
<reference key="8">
    <citation type="journal article" date="2016" name="Cell Calcium">
        <title>Cation dependencies and turnover rates of the human K(+)-dependent Na(+)-Ca(2+) exchangers NCKX1, NCKX2, NCKX3 and NCKX4.</title>
        <authorList>
            <person name="Jalloul A.H."/>
            <person name="Szerencsei R.T."/>
            <person name="Schnetkamp P.P."/>
        </authorList>
    </citation>
    <scope>FUNCTION</scope>
    <scope>TRANSPORTER ACTIVITY</scope>
    <scope>SUBCELLULAR LOCATION</scope>
</reference>
<reference key="9">
    <citation type="journal article" date="2013" name="Am. J. Hum. Genet.">
        <title>Identification of mutations in SLC24A4, encoding a potassium-dependent sodium/calcium exchanger, as a cause of amelogenesis imperfecta.</title>
        <authorList>
            <person name="Parry D.A."/>
            <person name="Poulter J.A."/>
            <person name="Logan C.V."/>
            <person name="Brookes S.J."/>
            <person name="Jafri H."/>
            <person name="Ferguson C.H."/>
            <person name="Anwari B.M."/>
            <person name="Rashid Y."/>
            <person name="Zhao H."/>
            <person name="Johnson C.A."/>
            <person name="Inglehearn C.F."/>
            <person name="Mighell A.J."/>
        </authorList>
    </citation>
    <scope>FUNCTION</scope>
    <scope>INVOLVEMENT IN AI2A5</scope>
    <scope>VARIANT AI2A5 CYS-499</scope>
</reference>
<reference key="10">
    <citation type="journal article" date="2014" name="J. Dent. Res.">
        <title>STIM1 and SLC24A4 are critical for enamel maturation.</title>
        <authorList>
            <person name="Wang S."/>
            <person name="Choi M."/>
            <person name="Richardson A.S."/>
            <person name="Reid B.M."/>
            <person name="Seymen F."/>
            <person name="Yildirim M."/>
            <person name="Tuna E."/>
            <person name="Gencay K."/>
            <person name="Simmer J.P."/>
            <person name="Hu J.C."/>
        </authorList>
    </citation>
    <scope>FUNCTION</scope>
    <scope>INVOLVEMENT IN AI2A5</scope>
    <scope>VARIANT AI2A5 VAL-146</scope>
</reference>
<reference key="11">
    <citation type="journal article" date="2015" name="Oral Surg. Oral Med. Oral Pathol. Oral Radiol.">
        <title>Hypomaturation amelogenesis imperfecta caused by a novel SLC24A4 mutation.</title>
        <authorList>
            <person name="Herzog C.R."/>
            <person name="Reid B.M."/>
            <person name="Seymen F."/>
            <person name="Koruyucu M."/>
            <person name="Tuna E.B."/>
            <person name="Simmer J.P."/>
            <person name="Hu J.C."/>
        </authorList>
    </citation>
    <scope>VARIANT AI2A5 ARG-436</scope>
</reference>
<reference key="12">
    <citation type="journal article" date="2020" name="BMC Med. Genet.">
        <title>A novel nonsense variant in SLC24A4 causing a rare form of amelogenesis imperfecta in a Pakistani family.</title>
        <authorList>
            <person name="Khan S.A."/>
            <person name="Khan M.A."/>
            <person name="Muhammad N."/>
            <person name="Bashir H."/>
            <person name="Khan N."/>
            <person name="Muhammad N."/>
            <person name="Yilmaz R."/>
            <person name="Khan S."/>
            <person name="Wasif N."/>
        </authorList>
    </citation>
    <scope>VARIANT AI2A5 398-GLN--ASP-622 DEL</scope>
</reference>
<reference key="13">
    <citation type="journal article" date="2020" name="Clin. Oral Investig.">
        <title>Expanding the phenotype of hypomaturation amelogenesis imperfecta due to a novel SLC24A4 variant.</title>
        <authorList>
            <person name="Lepperdinger U."/>
            <person name="Maurer E."/>
            <person name="Witsch-Baumgartner M."/>
            <person name="Stigler R."/>
            <person name="Zschocke J."/>
            <person name="Lussi A."/>
            <person name="Kapferer-Seebacher I."/>
        </authorList>
    </citation>
    <scope>VARIANT AI2A5 ASP-535</scope>
</reference>
<reference key="14">
    <citation type="journal article" date="2021" name="J. Pers. Med.">
        <title>Novel mutations in GPR68 and SLC24A4 cause hypomaturation amelogenesis imperfecta.</title>
        <authorList>
            <person name="Seymen F."/>
            <person name="Zhang H."/>
            <person name="Kasimoglu Y."/>
            <person name="Koruyucu M."/>
            <person name="Simmer J.P."/>
            <person name="Hu J.C."/>
            <person name="Kim J.W."/>
        </authorList>
    </citation>
    <scope>VARIANTS AI2A5 VAL-146 AND 205-ARG--ASP-622 DEL</scope>
</reference>
<name>NCKX4_HUMAN</name>
<proteinExistence type="evidence at protein level"/>
<accession>Q8NFF2</accession>
<accession>B4DHE7</accession>
<accession>B9ZVY2</accession>
<accession>Q8N8U6</accession>
<accession>Q8NCX1</accession>
<accession>Q8NFF0</accession>
<accession>Q8NFF1</accession>